<comment type="catalytic activity">
    <reaction evidence="1">
        <text>L-histidinol phosphate + 2-oxoglutarate = 3-(imidazol-4-yl)-2-oxopropyl phosphate + L-glutamate</text>
        <dbReference type="Rhea" id="RHEA:23744"/>
        <dbReference type="ChEBI" id="CHEBI:16810"/>
        <dbReference type="ChEBI" id="CHEBI:29985"/>
        <dbReference type="ChEBI" id="CHEBI:57766"/>
        <dbReference type="ChEBI" id="CHEBI:57980"/>
        <dbReference type="EC" id="2.6.1.9"/>
    </reaction>
</comment>
<comment type="cofactor">
    <cofactor evidence="1">
        <name>pyridoxal 5'-phosphate</name>
        <dbReference type="ChEBI" id="CHEBI:597326"/>
    </cofactor>
</comment>
<comment type="pathway">
    <text evidence="1">Amino-acid biosynthesis; L-histidine biosynthesis; L-histidine from 5-phospho-alpha-D-ribose 1-diphosphate: step 7/9.</text>
</comment>
<comment type="subunit">
    <text evidence="1">Homodimer.</text>
</comment>
<comment type="similarity">
    <text evidence="1">Belongs to the class-II pyridoxal-phosphate-dependent aminotransferase family. Histidinol-phosphate aminotransferase subfamily.</text>
</comment>
<feature type="chain" id="PRO_0000319755" description="Histidinol-phosphate aminotransferase">
    <location>
        <begin position="1"/>
        <end position="360"/>
    </location>
</feature>
<feature type="modified residue" description="N6-(pyridoxal phosphate)lysine" evidence="1">
    <location>
        <position position="211"/>
    </location>
</feature>
<keyword id="KW-0028">Amino-acid biosynthesis</keyword>
<keyword id="KW-0032">Aminotransferase</keyword>
<keyword id="KW-0368">Histidine biosynthesis</keyword>
<keyword id="KW-0663">Pyridoxal phosphate</keyword>
<keyword id="KW-1185">Reference proteome</keyword>
<keyword id="KW-0808">Transferase</keyword>
<organism>
    <name type="scientific">Cronobacter sakazakii (strain ATCC BAA-894)</name>
    <name type="common">Enterobacter sakazakii</name>
    <dbReference type="NCBI Taxonomy" id="290339"/>
    <lineage>
        <taxon>Bacteria</taxon>
        <taxon>Pseudomonadati</taxon>
        <taxon>Pseudomonadota</taxon>
        <taxon>Gammaproteobacteria</taxon>
        <taxon>Enterobacterales</taxon>
        <taxon>Enterobacteriaceae</taxon>
        <taxon>Cronobacter</taxon>
    </lineage>
</organism>
<sequence length="360" mass="39579">MSIEELARENVRTLTPYQSARRLGGNGDVWLNANEYPLPVEFQLTAQTLNRYPECQPKRVIERYAQYAGVKPEQVLVSRGADEGIELLIRAFCEPGRDAVLYCPPTYGMYSVSAETSGVECRTVQATDGWQLDLPAIAEQLDGVKVIFVCSPNNPTGQLINPQDLRTLLEMARGKAIVVADEAYIEFCPQATLAGWLGEYPHLVVLRTLSKAFALAGLRCGFTLANEEVINLLLKVIAPYPLSTPVADIAAQALSPEGITAMRERVAQVLANRDVLIAGLRETPCVEAVFDSETNYVLARITASSAVFKSLWDQGIILRDQNRQPTLSGCLRITVGTREECQRVIDALRDQPGLAATERV</sequence>
<proteinExistence type="inferred from homology"/>
<dbReference type="EC" id="2.6.1.9" evidence="1"/>
<dbReference type="EMBL" id="CP000783">
    <property type="protein sequence ID" value="ABU76463.1"/>
    <property type="molecule type" value="Genomic_DNA"/>
</dbReference>
<dbReference type="RefSeq" id="WP_012124348.1">
    <property type="nucleotide sequence ID" value="NC_009778.1"/>
</dbReference>
<dbReference type="SMR" id="A7MJP4"/>
<dbReference type="KEGG" id="esa:ESA_01196"/>
<dbReference type="PATRIC" id="fig|290339.8.peg.1062"/>
<dbReference type="HOGENOM" id="CLU_017584_3_1_6"/>
<dbReference type="UniPathway" id="UPA00031">
    <property type="reaction ID" value="UER00012"/>
</dbReference>
<dbReference type="Proteomes" id="UP000000260">
    <property type="component" value="Chromosome"/>
</dbReference>
<dbReference type="GO" id="GO:0004400">
    <property type="term" value="F:histidinol-phosphate transaminase activity"/>
    <property type="evidence" value="ECO:0007669"/>
    <property type="project" value="UniProtKB-UniRule"/>
</dbReference>
<dbReference type="GO" id="GO:0030170">
    <property type="term" value="F:pyridoxal phosphate binding"/>
    <property type="evidence" value="ECO:0007669"/>
    <property type="project" value="InterPro"/>
</dbReference>
<dbReference type="GO" id="GO:0000105">
    <property type="term" value="P:L-histidine biosynthetic process"/>
    <property type="evidence" value="ECO:0007669"/>
    <property type="project" value="UniProtKB-UniRule"/>
</dbReference>
<dbReference type="CDD" id="cd00609">
    <property type="entry name" value="AAT_like"/>
    <property type="match status" value="1"/>
</dbReference>
<dbReference type="FunFam" id="3.40.640.10:FF:000032">
    <property type="entry name" value="Histidinol-phosphate aminotransferase"/>
    <property type="match status" value="1"/>
</dbReference>
<dbReference type="Gene3D" id="3.90.1150.10">
    <property type="entry name" value="Aspartate Aminotransferase, domain 1"/>
    <property type="match status" value="1"/>
</dbReference>
<dbReference type="Gene3D" id="3.40.640.10">
    <property type="entry name" value="Type I PLP-dependent aspartate aminotransferase-like (Major domain)"/>
    <property type="match status" value="1"/>
</dbReference>
<dbReference type="HAMAP" id="MF_01023">
    <property type="entry name" value="HisC_aminotrans_2"/>
    <property type="match status" value="1"/>
</dbReference>
<dbReference type="InterPro" id="IPR001917">
    <property type="entry name" value="Aminotrans_II_pyridoxalP_BS"/>
</dbReference>
<dbReference type="InterPro" id="IPR004839">
    <property type="entry name" value="Aminotransferase_I/II_large"/>
</dbReference>
<dbReference type="InterPro" id="IPR005861">
    <property type="entry name" value="HisP_aminotrans"/>
</dbReference>
<dbReference type="InterPro" id="IPR015424">
    <property type="entry name" value="PyrdxlP-dep_Trfase"/>
</dbReference>
<dbReference type="InterPro" id="IPR015421">
    <property type="entry name" value="PyrdxlP-dep_Trfase_major"/>
</dbReference>
<dbReference type="InterPro" id="IPR015422">
    <property type="entry name" value="PyrdxlP-dep_Trfase_small"/>
</dbReference>
<dbReference type="NCBIfam" id="TIGR01141">
    <property type="entry name" value="hisC"/>
    <property type="match status" value="1"/>
</dbReference>
<dbReference type="PANTHER" id="PTHR42885:SF2">
    <property type="entry name" value="HISTIDINOL-PHOSPHATE AMINOTRANSFERASE"/>
    <property type="match status" value="1"/>
</dbReference>
<dbReference type="PANTHER" id="PTHR42885">
    <property type="entry name" value="HISTIDINOL-PHOSPHATE AMINOTRANSFERASE-RELATED"/>
    <property type="match status" value="1"/>
</dbReference>
<dbReference type="Pfam" id="PF00155">
    <property type="entry name" value="Aminotran_1_2"/>
    <property type="match status" value="1"/>
</dbReference>
<dbReference type="SUPFAM" id="SSF53383">
    <property type="entry name" value="PLP-dependent transferases"/>
    <property type="match status" value="1"/>
</dbReference>
<dbReference type="PROSITE" id="PS00599">
    <property type="entry name" value="AA_TRANSFER_CLASS_2"/>
    <property type="match status" value="1"/>
</dbReference>
<reference key="1">
    <citation type="journal article" date="2010" name="PLoS ONE">
        <title>Genome sequence of Cronobacter sakazakii BAA-894 and comparative genomic hybridization analysis with other Cronobacter species.</title>
        <authorList>
            <person name="Kucerova E."/>
            <person name="Clifton S.W."/>
            <person name="Xia X.Q."/>
            <person name="Long F."/>
            <person name="Porwollik S."/>
            <person name="Fulton L."/>
            <person name="Fronick C."/>
            <person name="Minx P."/>
            <person name="Kyung K."/>
            <person name="Warren W."/>
            <person name="Fulton R."/>
            <person name="Feng D."/>
            <person name="Wollam A."/>
            <person name="Shah N."/>
            <person name="Bhonagiri V."/>
            <person name="Nash W.E."/>
            <person name="Hallsworth-Pepin K."/>
            <person name="Wilson R.K."/>
            <person name="McClelland M."/>
            <person name="Forsythe S.J."/>
        </authorList>
    </citation>
    <scope>NUCLEOTIDE SEQUENCE [LARGE SCALE GENOMIC DNA]</scope>
    <source>
        <strain>ATCC BAA-894</strain>
    </source>
</reference>
<evidence type="ECO:0000255" key="1">
    <source>
        <dbReference type="HAMAP-Rule" id="MF_01023"/>
    </source>
</evidence>
<name>HIS8_CROS8</name>
<protein>
    <recommendedName>
        <fullName evidence="1">Histidinol-phosphate aminotransferase</fullName>
        <ecNumber evidence="1">2.6.1.9</ecNumber>
    </recommendedName>
    <alternativeName>
        <fullName evidence="1">Imidazole acetol-phosphate transaminase</fullName>
    </alternativeName>
</protein>
<accession>A7MJP4</accession>
<gene>
    <name evidence="1" type="primary">hisC</name>
    <name type="ordered locus">ESA_01196</name>
</gene>